<sequence>MNKVTTKTLFEKKQKGEKITMLTAYDYTFAKLFDSCMVDILLVGDSLGMVILGYDSTIPVTMEDMEHHVKAVARGTKYSMVVADMPFLSYHTTPEEAVRNAGRLIRAGAYAVKIEGCDDVIDKIEAVIKAQIPVMGHLGLTPQSVNVFGGYDLRAKEEKEAKKLIEDAKKLEEVGVFAIVLEKVPAMVAKQVQESVKVPIIGIGAGPYCDGQVLVCYDMLGMYEDFKPKFVKRYAEVGSIIKDAVSKYIDEVKRGEFPGKEHSY</sequence>
<proteinExistence type="inferred from homology"/>
<organism>
    <name type="scientific">Caldicellulosiruptor saccharolyticus (strain ATCC 43494 / DSM 8903 / Tp8T 6331)</name>
    <dbReference type="NCBI Taxonomy" id="351627"/>
    <lineage>
        <taxon>Bacteria</taxon>
        <taxon>Bacillati</taxon>
        <taxon>Bacillota</taxon>
        <taxon>Bacillota incertae sedis</taxon>
        <taxon>Caldicellulosiruptorales</taxon>
        <taxon>Caldicellulosiruptoraceae</taxon>
        <taxon>Caldicellulosiruptor</taxon>
    </lineage>
</organism>
<keyword id="KW-0963">Cytoplasm</keyword>
<keyword id="KW-0460">Magnesium</keyword>
<keyword id="KW-0479">Metal-binding</keyword>
<keyword id="KW-0566">Pantothenate biosynthesis</keyword>
<keyword id="KW-0808">Transferase</keyword>
<evidence type="ECO:0000255" key="1">
    <source>
        <dbReference type="HAMAP-Rule" id="MF_00156"/>
    </source>
</evidence>
<accession>A4XMZ4</accession>
<gene>
    <name evidence="1" type="primary">panB</name>
    <name type="ordered locus">Csac_2710</name>
</gene>
<name>PANB_CALS8</name>
<dbReference type="EC" id="2.1.2.11" evidence="1"/>
<dbReference type="EMBL" id="CP000679">
    <property type="protein sequence ID" value="ABP68279.1"/>
    <property type="molecule type" value="Genomic_DNA"/>
</dbReference>
<dbReference type="RefSeq" id="WP_011918196.1">
    <property type="nucleotide sequence ID" value="NC_009437.1"/>
</dbReference>
<dbReference type="SMR" id="A4XMZ4"/>
<dbReference type="STRING" id="351627.Csac_2710"/>
<dbReference type="KEGG" id="csc:Csac_2710"/>
<dbReference type="eggNOG" id="COG0413">
    <property type="taxonomic scope" value="Bacteria"/>
</dbReference>
<dbReference type="HOGENOM" id="CLU_036645_1_0_9"/>
<dbReference type="OrthoDB" id="9781789at2"/>
<dbReference type="UniPathway" id="UPA00028">
    <property type="reaction ID" value="UER00003"/>
</dbReference>
<dbReference type="Proteomes" id="UP000000256">
    <property type="component" value="Chromosome"/>
</dbReference>
<dbReference type="GO" id="GO:0005737">
    <property type="term" value="C:cytoplasm"/>
    <property type="evidence" value="ECO:0007669"/>
    <property type="project" value="UniProtKB-SubCell"/>
</dbReference>
<dbReference type="GO" id="GO:0003864">
    <property type="term" value="F:3-methyl-2-oxobutanoate hydroxymethyltransferase activity"/>
    <property type="evidence" value="ECO:0007669"/>
    <property type="project" value="UniProtKB-UniRule"/>
</dbReference>
<dbReference type="GO" id="GO:0000287">
    <property type="term" value="F:magnesium ion binding"/>
    <property type="evidence" value="ECO:0007669"/>
    <property type="project" value="TreeGrafter"/>
</dbReference>
<dbReference type="GO" id="GO:0015940">
    <property type="term" value="P:pantothenate biosynthetic process"/>
    <property type="evidence" value="ECO:0007669"/>
    <property type="project" value="UniProtKB-UniRule"/>
</dbReference>
<dbReference type="CDD" id="cd06557">
    <property type="entry name" value="KPHMT-like"/>
    <property type="match status" value="1"/>
</dbReference>
<dbReference type="FunFam" id="3.20.20.60:FF:000003">
    <property type="entry name" value="3-methyl-2-oxobutanoate hydroxymethyltransferase"/>
    <property type="match status" value="1"/>
</dbReference>
<dbReference type="Gene3D" id="3.20.20.60">
    <property type="entry name" value="Phosphoenolpyruvate-binding domains"/>
    <property type="match status" value="1"/>
</dbReference>
<dbReference type="HAMAP" id="MF_00156">
    <property type="entry name" value="PanB"/>
    <property type="match status" value="1"/>
</dbReference>
<dbReference type="InterPro" id="IPR003700">
    <property type="entry name" value="Pantoate_hydroxy_MeTrfase"/>
</dbReference>
<dbReference type="InterPro" id="IPR015813">
    <property type="entry name" value="Pyrv/PenolPyrv_kinase-like_dom"/>
</dbReference>
<dbReference type="InterPro" id="IPR040442">
    <property type="entry name" value="Pyrv_kinase-like_dom_sf"/>
</dbReference>
<dbReference type="NCBIfam" id="TIGR00222">
    <property type="entry name" value="panB"/>
    <property type="match status" value="1"/>
</dbReference>
<dbReference type="NCBIfam" id="NF001452">
    <property type="entry name" value="PRK00311.1"/>
    <property type="match status" value="1"/>
</dbReference>
<dbReference type="PANTHER" id="PTHR20881">
    <property type="entry name" value="3-METHYL-2-OXOBUTANOATE HYDROXYMETHYLTRANSFERASE"/>
    <property type="match status" value="1"/>
</dbReference>
<dbReference type="PANTHER" id="PTHR20881:SF0">
    <property type="entry name" value="3-METHYL-2-OXOBUTANOATE HYDROXYMETHYLTRANSFERASE"/>
    <property type="match status" value="1"/>
</dbReference>
<dbReference type="Pfam" id="PF02548">
    <property type="entry name" value="Pantoate_transf"/>
    <property type="match status" value="1"/>
</dbReference>
<dbReference type="PIRSF" id="PIRSF000388">
    <property type="entry name" value="Pantoate_hydroxy_MeTrfase"/>
    <property type="match status" value="1"/>
</dbReference>
<dbReference type="SUPFAM" id="SSF51621">
    <property type="entry name" value="Phosphoenolpyruvate/pyruvate domain"/>
    <property type="match status" value="1"/>
</dbReference>
<reference key="1">
    <citation type="submission" date="2007-04" db="EMBL/GenBank/DDBJ databases">
        <title>Genome sequence of the thermophilic hydrogen-producing bacterium Caldicellulosiruptor saccharolyticus DSM 8903.</title>
        <authorList>
            <person name="Copeland A."/>
            <person name="Lucas S."/>
            <person name="Lapidus A."/>
            <person name="Barry K."/>
            <person name="Detter J.C."/>
            <person name="Glavina del Rio T."/>
            <person name="Hammon N."/>
            <person name="Israni S."/>
            <person name="Dalin E."/>
            <person name="Tice H."/>
            <person name="Pitluck S."/>
            <person name="Kiss H."/>
            <person name="Brettin T."/>
            <person name="Bruce D."/>
            <person name="Han C."/>
            <person name="Schmutz J."/>
            <person name="Larimer F."/>
            <person name="Land M."/>
            <person name="Hauser L."/>
            <person name="Kyrpides N."/>
            <person name="Lykidis A."/>
            <person name="van de Werken H.J.G."/>
            <person name="Verhaart M.R.A."/>
            <person name="VanFossen A.L."/>
            <person name="Lewis D.L."/>
            <person name="Nichols J.D."/>
            <person name="Goorissen H.P."/>
            <person name="van Niel E.W.J."/>
            <person name="Stams F.J.M."/>
            <person name="Willquist K.U."/>
            <person name="Ward D.E."/>
            <person name="van der Oost J."/>
            <person name="Kelly R.M."/>
            <person name="Kengen S.M.W."/>
            <person name="Richardson P."/>
        </authorList>
    </citation>
    <scope>NUCLEOTIDE SEQUENCE [LARGE SCALE GENOMIC DNA]</scope>
    <source>
        <strain>ATCC 43494 / DSM 8903 / Tp8T 6331</strain>
    </source>
</reference>
<comment type="function">
    <text evidence="1">Catalyzes the reversible reaction in which hydroxymethyl group from 5,10-methylenetetrahydrofolate is transferred onto alpha-ketoisovalerate to form ketopantoate.</text>
</comment>
<comment type="catalytic activity">
    <reaction evidence="1">
        <text>3-methyl-2-oxobutanoate + (6R)-5,10-methylene-5,6,7,8-tetrahydrofolate + H2O = 2-dehydropantoate + (6S)-5,6,7,8-tetrahydrofolate</text>
        <dbReference type="Rhea" id="RHEA:11824"/>
        <dbReference type="ChEBI" id="CHEBI:11561"/>
        <dbReference type="ChEBI" id="CHEBI:11851"/>
        <dbReference type="ChEBI" id="CHEBI:15377"/>
        <dbReference type="ChEBI" id="CHEBI:15636"/>
        <dbReference type="ChEBI" id="CHEBI:57453"/>
        <dbReference type="EC" id="2.1.2.11"/>
    </reaction>
</comment>
<comment type="cofactor">
    <cofactor evidence="1">
        <name>Mg(2+)</name>
        <dbReference type="ChEBI" id="CHEBI:18420"/>
    </cofactor>
    <text evidence="1">Binds 1 Mg(2+) ion per subunit.</text>
</comment>
<comment type="pathway">
    <text evidence="1">Cofactor biosynthesis; (R)-pantothenate biosynthesis; (R)-pantoate from 3-methyl-2-oxobutanoate: step 1/2.</text>
</comment>
<comment type="subunit">
    <text evidence="1">Homodecamer; pentamer of dimers.</text>
</comment>
<comment type="subcellular location">
    <subcellularLocation>
        <location evidence="1">Cytoplasm</location>
    </subcellularLocation>
</comment>
<comment type="similarity">
    <text evidence="1">Belongs to the PanB family.</text>
</comment>
<protein>
    <recommendedName>
        <fullName evidence="1">3-methyl-2-oxobutanoate hydroxymethyltransferase</fullName>
        <ecNumber evidence="1">2.1.2.11</ecNumber>
    </recommendedName>
    <alternativeName>
        <fullName evidence="1">Ketopantoate hydroxymethyltransferase</fullName>
        <shortName evidence="1">KPHMT</shortName>
    </alternativeName>
</protein>
<feature type="chain" id="PRO_1000076820" description="3-methyl-2-oxobutanoate hydroxymethyltransferase">
    <location>
        <begin position="1"/>
        <end position="264"/>
    </location>
</feature>
<feature type="active site" description="Proton acceptor" evidence="1">
    <location>
        <position position="182"/>
    </location>
</feature>
<feature type="binding site" evidence="1">
    <location>
        <begin position="45"/>
        <end position="46"/>
    </location>
    <ligand>
        <name>3-methyl-2-oxobutanoate</name>
        <dbReference type="ChEBI" id="CHEBI:11851"/>
    </ligand>
</feature>
<feature type="binding site" evidence="1">
    <location>
        <position position="45"/>
    </location>
    <ligand>
        <name>Mg(2+)</name>
        <dbReference type="ChEBI" id="CHEBI:18420"/>
    </ligand>
</feature>
<feature type="binding site" evidence="1">
    <location>
        <position position="84"/>
    </location>
    <ligand>
        <name>3-methyl-2-oxobutanoate</name>
        <dbReference type="ChEBI" id="CHEBI:11851"/>
    </ligand>
</feature>
<feature type="binding site" evidence="1">
    <location>
        <position position="84"/>
    </location>
    <ligand>
        <name>Mg(2+)</name>
        <dbReference type="ChEBI" id="CHEBI:18420"/>
    </ligand>
</feature>
<feature type="binding site" evidence="1">
    <location>
        <position position="113"/>
    </location>
    <ligand>
        <name>3-methyl-2-oxobutanoate</name>
        <dbReference type="ChEBI" id="CHEBI:11851"/>
    </ligand>
</feature>
<feature type="binding site" evidence="1">
    <location>
        <position position="115"/>
    </location>
    <ligand>
        <name>Mg(2+)</name>
        <dbReference type="ChEBI" id="CHEBI:18420"/>
    </ligand>
</feature>